<accession>Q04398</accession>
<accession>D6VTC6</accession>
<proteinExistence type="predicted"/>
<organism>
    <name type="scientific">Saccharomyces cerevisiae (strain ATCC 204508 / S288c)</name>
    <name type="common">Baker's yeast</name>
    <dbReference type="NCBI Taxonomy" id="559292"/>
    <lineage>
        <taxon>Eukaryota</taxon>
        <taxon>Fungi</taxon>
        <taxon>Dikarya</taxon>
        <taxon>Ascomycota</taxon>
        <taxon>Saccharomycotina</taxon>
        <taxon>Saccharomycetes</taxon>
        <taxon>Saccharomycetales</taxon>
        <taxon>Saccharomycetaceae</taxon>
        <taxon>Saccharomyces</taxon>
    </lineage>
</organism>
<gene>
    <name type="primary">SPG3</name>
    <name type="ordered locus">YDR504C</name>
    <name type="ORF">D9719.10</name>
</gene>
<name>SPG3_YEAST</name>
<comment type="function">
    <text evidence="2">Required for survival during stationary phase.</text>
</comment>
<comment type="subcellular location">
    <subcellularLocation>
        <location evidence="3">Membrane</location>
        <topology evidence="3">Multi-pass membrane protein</topology>
    </subcellularLocation>
</comment>
<dbReference type="EMBL" id="U33057">
    <property type="protein sequence ID" value="AAB64946.1"/>
    <property type="molecule type" value="Genomic_DNA"/>
</dbReference>
<dbReference type="EMBL" id="AY558176">
    <property type="protein sequence ID" value="AAS56502.1"/>
    <property type="molecule type" value="Genomic_DNA"/>
</dbReference>
<dbReference type="EMBL" id="BK006938">
    <property type="protein sequence ID" value="DAA12336.1"/>
    <property type="molecule type" value="Genomic_DNA"/>
</dbReference>
<dbReference type="PIR" id="S69562">
    <property type="entry name" value="S69562"/>
</dbReference>
<dbReference type="RefSeq" id="NP_010792.1">
    <property type="nucleotide sequence ID" value="NM_001180812.1"/>
</dbReference>
<dbReference type="SMR" id="Q04398"/>
<dbReference type="BioGRID" id="32555">
    <property type="interactions" value="26"/>
</dbReference>
<dbReference type="DIP" id="DIP-5678N"/>
<dbReference type="FunCoup" id="Q04398">
    <property type="interactions" value="28"/>
</dbReference>
<dbReference type="STRING" id="4932.YDR504C"/>
<dbReference type="GlyCosmos" id="Q04398">
    <property type="glycosylation" value="1 site, No reported glycans"/>
</dbReference>
<dbReference type="GlyGen" id="Q04398">
    <property type="glycosylation" value="1 site"/>
</dbReference>
<dbReference type="PaxDb" id="4932-YDR504C"/>
<dbReference type="EnsemblFungi" id="YDR504C_mRNA">
    <property type="protein sequence ID" value="YDR504C"/>
    <property type="gene ID" value="YDR504C"/>
</dbReference>
<dbReference type="GeneID" id="852115"/>
<dbReference type="KEGG" id="sce:YDR504C"/>
<dbReference type="AGR" id="SGD:S000002912"/>
<dbReference type="SGD" id="S000002912">
    <property type="gene designation" value="SPG3"/>
</dbReference>
<dbReference type="VEuPathDB" id="FungiDB:YDR504C"/>
<dbReference type="HOGENOM" id="CLU_1972185_0_0_1"/>
<dbReference type="InParanoid" id="Q04398"/>
<dbReference type="OrthoDB" id="10381298at2759"/>
<dbReference type="BioCyc" id="YEAST:G3O-30025-MONOMER"/>
<dbReference type="BioGRID-ORCS" id="852115">
    <property type="hits" value="0 hits in 10 CRISPR screens"/>
</dbReference>
<dbReference type="PRO" id="PR:Q04398"/>
<dbReference type="Proteomes" id="UP000002311">
    <property type="component" value="Chromosome IV"/>
</dbReference>
<dbReference type="RNAct" id="Q04398">
    <property type="molecule type" value="protein"/>
</dbReference>
<dbReference type="GO" id="GO:0005783">
    <property type="term" value="C:endoplasmic reticulum"/>
    <property type="evidence" value="ECO:0007005"/>
    <property type="project" value="SGD"/>
</dbReference>
<dbReference type="GO" id="GO:0016020">
    <property type="term" value="C:membrane"/>
    <property type="evidence" value="ECO:0007669"/>
    <property type="project" value="UniProtKB-SubCell"/>
</dbReference>
<feature type="chain" id="PRO_0000072121" description="Stationary phase protein 3">
    <location>
        <begin position="1"/>
        <end position="127"/>
    </location>
</feature>
<feature type="transmembrane region" description="Helical" evidence="1">
    <location>
        <begin position="29"/>
        <end position="49"/>
    </location>
</feature>
<feature type="transmembrane region" description="Helical" evidence="1">
    <location>
        <begin position="63"/>
        <end position="83"/>
    </location>
</feature>
<feature type="glycosylation site" description="N-linked (GlcNAc...) asparagine" evidence="1">
    <location>
        <position position="86"/>
    </location>
</feature>
<reference key="1">
    <citation type="journal article" date="1997" name="Nature">
        <title>The nucleotide sequence of Saccharomyces cerevisiae chromosome IV.</title>
        <authorList>
            <person name="Jacq C."/>
            <person name="Alt-Moerbe J."/>
            <person name="Andre B."/>
            <person name="Arnold W."/>
            <person name="Bahr A."/>
            <person name="Ballesta J.P.G."/>
            <person name="Bargues M."/>
            <person name="Baron L."/>
            <person name="Becker A."/>
            <person name="Biteau N."/>
            <person name="Bloecker H."/>
            <person name="Blugeon C."/>
            <person name="Boskovic J."/>
            <person name="Brandt P."/>
            <person name="Brueckner M."/>
            <person name="Buitrago M.J."/>
            <person name="Coster F."/>
            <person name="Delaveau T."/>
            <person name="del Rey F."/>
            <person name="Dujon B."/>
            <person name="Eide L.G."/>
            <person name="Garcia-Cantalejo J.M."/>
            <person name="Goffeau A."/>
            <person name="Gomez-Peris A."/>
            <person name="Granotier C."/>
            <person name="Hanemann V."/>
            <person name="Hankeln T."/>
            <person name="Hoheisel J.D."/>
            <person name="Jaeger W."/>
            <person name="Jimenez A."/>
            <person name="Jonniaux J.-L."/>
            <person name="Kraemer C."/>
            <person name="Kuester H."/>
            <person name="Laamanen P."/>
            <person name="Legros Y."/>
            <person name="Louis E.J."/>
            <person name="Moeller-Rieker S."/>
            <person name="Monnet A."/>
            <person name="Moro M."/>
            <person name="Mueller-Auer S."/>
            <person name="Nussbaumer B."/>
            <person name="Paricio N."/>
            <person name="Paulin L."/>
            <person name="Perea J."/>
            <person name="Perez-Alonso M."/>
            <person name="Perez-Ortin J.E."/>
            <person name="Pohl T.M."/>
            <person name="Prydz H."/>
            <person name="Purnelle B."/>
            <person name="Rasmussen S.W."/>
            <person name="Remacha M.A."/>
            <person name="Revuelta J.L."/>
            <person name="Rieger M."/>
            <person name="Salom D."/>
            <person name="Saluz H.P."/>
            <person name="Saiz J.E."/>
            <person name="Saren A.-M."/>
            <person name="Schaefer M."/>
            <person name="Scharfe M."/>
            <person name="Schmidt E.R."/>
            <person name="Schneider C."/>
            <person name="Scholler P."/>
            <person name="Schwarz S."/>
            <person name="Soler-Mira A."/>
            <person name="Urrestarazu L.A."/>
            <person name="Verhasselt P."/>
            <person name="Vissers S."/>
            <person name="Voet M."/>
            <person name="Volckaert G."/>
            <person name="Wagner G."/>
            <person name="Wambutt R."/>
            <person name="Wedler E."/>
            <person name="Wedler H."/>
            <person name="Woelfl S."/>
            <person name="Harris D.E."/>
            <person name="Bowman S."/>
            <person name="Brown D."/>
            <person name="Churcher C.M."/>
            <person name="Connor R."/>
            <person name="Dedman K."/>
            <person name="Gentles S."/>
            <person name="Hamlin N."/>
            <person name="Hunt S."/>
            <person name="Jones L."/>
            <person name="McDonald S."/>
            <person name="Murphy L.D."/>
            <person name="Niblett D."/>
            <person name="Odell C."/>
            <person name="Oliver K."/>
            <person name="Rajandream M.A."/>
            <person name="Richards C."/>
            <person name="Shore L."/>
            <person name="Walsh S.V."/>
            <person name="Barrell B.G."/>
            <person name="Dietrich F.S."/>
            <person name="Mulligan J.T."/>
            <person name="Allen E."/>
            <person name="Araujo R."/>
            <person name="Aviles E."/>
            <person name="Berno A."/>
            <person name="Carpenter J."/>
            <person name="Chen E."/>
            <person name="Cherry J.M."/>
            <person name="Chung E."/>
            <person name="Duncan M."/>
            <person name="Hunicke-Smith S."/>
            <person name="Hyman R.W."/>
            <person name="Komp C."/>
            <person name="Lashkari D."/>
            <person name="Lew H."/>
            <person name="Lin D."/>
            <person name="Mosedale D."/>
            <person name="Nakahara K."/>
            <person name="Namath A."/>
            <person name="Oefner P."/>
            <person name="Oh C."/>
            <person name="Petel F.X."/>
            <person name="Roberts D."/>
            <person name="Schramm S."/>
            <person name="Schroeder M."/>
            <person name="Shogren T."/>
            <person name="Shroff N."/>
            <person name="Winant A."/>
            <person name="Yelton M.A."/>
            <person name="Botstein D."/>
            <person name="Davis R.W."/>
            <person name="Johnston M."/>
            <person name="Andrews S."/>
            <person name="Brinkman R."/>
            <person name="Cooper J."/>
            <person name="Ding H."/>
            <person name="Du Z."/>
            <person name="Favello A."/>
            <person name="Fulton L."/>
            <person name="Gattung S."/>
            <person name="Greco T."/>
            <person name="Hallsworth K."/>
            <person name="Hawkins J."/>
            <person name="Hillier L.W."/>
            <person name="Jier M."/>
            <person name="Johnson D."/>
            <person name="Johnston L."/>
            <person name="Kirsten J."/>
            <person name="Kucaba T."/>
            <person name="Langston Y."/>
            <person name="Latreille P."/>
            <person name="Le T."/>
            <person name="Mardis E."/>
            <person name="Menezes S."/>
            <person name="Miller N."/>
            <person name="Nhan M."/>
            <person name="Pauley A."/>
            <person name="Peluso D."/>
            <person name="Rifkin L."/>
            <person name="Riles L."/>
            <person name="Taich A."/>
            <person name="Trevaskis E."/>
            <person name="Vignati D."/>
            <person name="Wilcox L."/>
            <person name="Wohldman P."/>
            <person name="Vaudin M."/>
            <person name="Wilson R."/>
            <person name="Waterston R."/>
            <person name="Albermann K."/>
            <person name="Hani J."/>
            <person name="Heumann K."/>
            <person name="Kleine K."/>
            <person name="Mewes H.-W."/>
            <person name="Zollner A."/>
            <person name="Zaccaria P."/>
        </authorList>
    </citation>
    <scope>NUCLEOTIDE SEQUENCE [LARGE SCALE GENOMIC DNA]</scope>
    <source>
        <strain>ATCC 204508 / S288c</strain>
    </source>
</reference>
<reference key="2">
    <citation type="journal article" date="2014" name="G3 (Bethesda)">
        <title>The reference genome sequence of Saccharomyces cerevisiae: Then and now.</title>
        <authorList>
            <person name="Engel S.R."/>
            <person name="Dietrich F.S."/>
            <person name="Fisk D.G."/>
            <person name="Binkley G."/>
            <person name="Balakrishnan R."/>
            <person name="Costanzo M.C."/>
            <person name="Dwight S.S."/>
            <person name="Hitz B.C."/>
            <person name="Karra K."/>
            <person name="Nash R.S."/>
            <person name="Weng S."/>
            <person name="Wong E.D."/>
            <person name="Lloyd P."/>
            <person name="Skrzypek M.S."/>
            <person name="Miyasato S.R."/>
            <person name="Simison M."/>
            <person name="Cherry J.M."/>
        </authorList>
    </citation>
    <scope>GENOME REANNOTATION</scope>
    <source>
        <strain>ATCC 204508 / S288c</strain>
    </source>
</reference>
<reference key="3">
    <citation type="journal article" date="2007" name="Genome Res.">
        <title>Approaching a complete repository of sequence-verified protein-encoding clones for Saccharomyces cerevisiae.</title>
        <authorList>
            <person name="Hu Y."/>
            <person name="Rolfs A."/>
            <person name="Bhullar B."/>
            <person name="Murthy T.V.S."/>
            <person name="Zhu C."/>
            <person name="Berger M.F."/>
            <person name="Camargo A.A."/>
            <person name="Kelley F."/>
            <person name="McCarron S."/>
            <person name="Jepson D."/>
            <person name="Richardson A."/>
            <person name="Raphael J."/>
            <person name="Moreira D."/>
            <person name="Taycher E."/>
            <person name="Zuo D."/>
            <person name="Mohr S."/>
            <person name="Kane M.F."/>
            <person name="Williamson J."/>
            <person name="Simpson A.J.G."/>
            <person name="Bulyk M.L."/>
            <person name="Harlow E."/>
            <person name="Marsischky G."/>
            <person name="Kolodner R.D."/>
            <person name="LaBaer J."/>
        </authorList>
    </citation>
    <scope>NUCLEOTIDE SEQUENCE [GENOMIC DNA]</scope>
    <source>
        <strain>ATCC 204508 / S288c</strain>
    </source>
</reference>
<reference key="4">
    <citation type="journal article" date="2004" name="Mol. Biol. Cell">
        <title>Genomic analysis of stationary-phase and exit in Saccharomyces cerevisiae: gene expression and identification of novel essential genes.</title>
        <authorList>
            <person name="Martinez M.J."/>
            <person name="Roy S."/>
            <person name="Archuletta A.B."/>
            <person name="Wentzell P.D."/>
            <person name="Anna-Arriola S.S."/>
            <person name="Rodriguez A.L."/>
            <person name="Aragon A.D."/>
            <person name="Quinones G.A."/>
            <person name="Allen C."/>
            <person name="Werner-Washburne M."/>
        </authorList>
    </citation>
    <scope>FUNCTION</scope>
</reference>
<protein>
    <recommendedName>
        <fullName>Stationary phase protein 3</fullName>
    </recommendedName>
</protein>
<sequence length="127" mass="15580">MICYFLVVTINFLKEKTTICHYFVNIFSLFLFLFVFVFVFIFVYFFYVILFYRFCSLFTYFPANSIWYYLSIINIFFPLCFFLYENFTGRNRRKCSLFCLTLIKITYTSPNHGFMVTGKEKFEKLRD</sequence>
<evidence type="ECO:0000255" key="1"/>
<evidence type="ECO:0000269" key="2">
    <source>
    </source>
</evidence>
<evidence type="ECO:0000305" key="3"/>
<keyword id="KW-0325">Glycoprotein</keyword>
<keyword id="KW-0472">Membrane</keyword>
<keyword id="KW-1185">Reference proteome</keyword>
<keyword id="KW-0812">Transmembrane</keyword>
<keyword id="KW-1133">Transmembrane helix</keyword>